<sequence>MSIESWTAPVASTPVQANVTIPGSKSQTNRALMLAALAAAQGQGTSTIGGALRSRDTELMISALRTLGLHVDEAGSVLTVNGRITPGEDAQVDCGLAGTVLRFVPPLAALSANPVTFDGDEQARARPITPLLDALRGLGVPVDGVGLPFQVQGSGSVAGGTVAIDASASSQFVSGLLLCAASFTQGVTVQHTGSPVPSAPHIAMTVMMLRQAGVQVDDSVGNRWQVRPGTVAARHWVVEPDLTNAVAFLAAAAVSGGTVRITGWPKTSVQPADNILNILFRLNVVVNQTDSFLEVQGSTVYDGFDVDLRDVGELTPSVAALAALATPGSVSQLHGIAHLRGHETDRLAALSTEINRLGGDCQETSDGLIITATPLRPGVWRAYADHRMAMAGAIVGLRVSGVEVDDIGATHKTLPQFPQLWANMLKRSTG</sequence>
<evidence type="ECO:0000255" key="1">
    <source>
        <dbReference type="HAMAP-Rule" id="MF_00210"/>
    </source>
</evidence>
<evidence type="ECO:0000305" key="2"/>
<proteinExistence type="inferred from homology"/>
<reference key="1">
    <citation type="journal article" date="2001" name="Nature">
        <title>Massive gene decay in the leprosy bacillus.</title>
        <authorList>
            <person name="Cole S.T."/>
            <person name="Eiglmeier K."/>
            <person name="Parkhill J."/>
            <person name="James K.D."/>
            <person name="Thomson N.R."/>
            <person name="Wheeler P.R."/>
            <person name="Honore N."/>
            <person name="Garnier T."/>
            <person name="Churcher C.M."/>
            <person name="Harris D.E."/>
            <person name="Mungall K.L."/>
            <person name="Basham D."/>
            <person name="Brown D."/>
            <person name="Chillingworth T."/>
            <person name="Connor R."/>
            <person name="Davies R.M."/>
            <person name="Devlin K."/>
            <person name="Duthoy S."/>
            <person name="Feltwell T."/>
            <person name="Fraser A."/>
            <person name="Hamlin N."/>
            <person name="Holroyd S."/>
            <person name="Hornsby T."/>
            <person name="Jagels K."/>
            <person name="Lacroix C."/>
            <person name="Maclean J."/>
            <person name="Moule S."/>
            <person name="Murphy L.D."/>
            <person name="Oliver K."/>
            <person name="Quail M.A."/>
            <person name="Rajandream M.A."/>
            <person name="Rutherford K.M."/>
            <person name="Rutter S."/>
            <person name="Seeger K."/>
            <person name="Simon S."/>
            <person name="Simmonds M."/>
            <person name="Skelton J."/>
            <person name="Squares R."/>
            <person name="Squares S."/>
            <person name="Stevens K."/>
            <person name="Taylor K."/>
            <person name="Whitehead S."/>
            <person name="Woodward J.R."/>
            <person name="Barrell B.G."/>
        </authorList>
    </citation>
    <scope>NUCLEOTIDE SEQUENCE [LARGE SCALE GENOMIC DNA]</scope>
    <source>
        <strain>TN</strain>
    </source>
</reference>
<keyword id="KW-0028">Amino-acid biosynthesis</keyword>
<keyword id="KW-0057">Aromatic amino acid biosynthesis</keyword>
<keyword id="KW-0963">Cytoplasm</keyword>
<keyword id="KW-1185">Reference proteome</keyword>
<keyword id="KW-0808">Transferase</keyword>
<organism>
    <name type="scientific">Mycobacterium leprae (strain TN)</name>
    <dbReference type="NCBI Taxonomy" id="272631"/>
    <lineage>
        <taxon>Bacteria</taxon>
        <taxon>Bacillati</taxon>
        <taxon>Actinomycetota</taxon>
        <taxon>Actinomycetes</taxon>
        <taxon>Mycobacteriales</taxon>
        <taxon>Mycobacteriaceae</taxon>
        <taxon>Mycobacterium</taxon>
    </lineage>
</organism>
<feature type="chain" id="PRO_0000088272" description="3-phosphoshikimate 1-carboxyvinyltransferase">
    <location>
        <begin position="1"/>
        <end position="430"/>
    </location>
</feature>
<feature type="active site" description="Proton acceptor" evidence="1">
    <location>
        <position position="313"/>
    </location>
</feature>
<feature type="binding site" evidence="1">
    <location>
        <position position="25"/>
    </location>
    <ligand>
        <name>3-phosphoshikimate</name>
        <dbReference type="ChEBI" id="CHEBI:145989"/>
    </ligand>
</feature>
<feature type="binding site" evidence="1">
    <location>
        <position position="25"/>
    </location>
    <ligand>
        <name>phosphoenolpyruvate</name>
        <dbReference type="ChEBI" id="CHEBI:58702"/>
    </ligand>
</feature>
<feature type="binding site" evidence="1">
    <location>
        <position position="26"/>
    </location>
    <ligand>
        <name>3-phosphoshikimate</name>
        <dbReference type="ChEBI" id="CHEBI:145989"/>
    </ligand>
</feature>
<feature type="binding site" evidence="1">
    <location>
        <position position="30"/>
    </location>
    <ligand>
        <name>3-phosphoshikimate</name>
        <dbReference type="ChEBI" id="CHEBI:145989"/>
    </ligand>
</feature>
<feature type="binding site" evidence="1">
    <location>
        <position position="98"/>
    </location>
    <ligand>
        <name>phosphoenolpyruvate</name>
        <dbReference type="ChEBI" id="CHEBI:58702"/>
    </ligand>
</feature>
<feature type="binding site" evidence="1">
    <location>
        <position position="126"/>
    </location>
    <ligand>
        <name>phosphoenolpyruvate</name>
        <dbReference type="ChEBI" id="CHEBI:58702"/>
    </ligand>
</feature>
<feature type="binding site" evidence="1">
    <location>
        <position position="169"/>
    </location>
    <ligand>
        <name>3-phosphoshikimate</name>
        <dbReference type="ChEBI" id="CHEBI:145989"/>
    </ligand>
</feature>
<feature type="binding site" evidence="1">
    <location>
        <position position="170"/>
    </location>
    <ligand>
        <name>3-phosphoshikimate</name>
        <dbReference type="ChEBI" id="CHEBI:145989"/>
    </ligand>
</feature>
<feature type="binding site" evidence="1">
    <location>
        <position position="171"/>
    </location>
    <ligand>
        <name>3-phosphoshikimate</name>
        <dbReference type="ChEBI" id="CHEBI:145989"/>
    </ligand>
</feature>
<feature type="binding site" evidence="1">
    <location>
        <position position="171"/>
    </location>
    <ligand>
        <name>phosphoenolpyruvate</name>
        <dbReference type="ChEBI" id="CHEBI:58702"/>
    </ligand>
</feature>
<feature type="binding site" evidence="1">
    <location>
        <position position="198"/>
    </location>
    <ligand>
        <name>3-phosphoshikimate</name>
        <dbReference type="ChEBI" id="CHEBI:145989"/>
    </ligand>
</feature>
<feature type="binding site" evidence="1">
    <location>
        <position position="313"/>
    </location>
    <ligand>
        <name>3-phosphoshikimate</name>
        <dbReference type="ChEBI" id="CHEBI:145989"/>
    </ligand>
</feature>
<feature type="binding site" evidence="1">
    <location>
        <position position="342"/>
    </location>
    <ligand>
        <name>3-phosphoshikimate</name>
        <dbReference type="ChEBI" id="CHEBI:145989"/>
    </ligand>
</feature>
<feature type="binding site" evidence="1">
    <location>
        <position position="346"/>
    </location>
    <ligand>
        <name>phosphoenolpyruvate</name>
        <dbReference type="ChEBI" id="CHEBI:58702"/>
    </ligand>
</feature>
<feature type="binding site" evidence="1">
    <location>
        <position position="387"/>
    </location>
    <ligand>
        <name>phosphoenolpyruvate</name>
        <dbReference type="ChEBI" id="CHEBI:58702"/>
    </ligand>
</feature>
<feature type="binding site" evidence="1">
    <location>
        <position position="412"/>
    </location>
    <ligand>
        <name>phosphoenolpyruvate</name>
        <dbReference type="ChEBI" id="CHEBI:58702"/>
    </ligand>
</feature>
<protein>
    <recommendedName>
        <fullName evidence="1">3-phosphoshikimate 1-carboxyvinyltransferase</fullName>
        <ecNumber evidence="1">2.5.1.19</ecNumber>
    </recommendedName>
    <alternativeName>
        <fullName evidence="1">5-enolpyruvylshikimate-3-phosphate synthase</fullName>
        <shortName evidence="1">EPSP synthase</shortName>
        <shortName evidence="1">EPSPS</shortName>
    </alternativeName>
</protein>
<dbReference type="EC" id="2.5.1.19" evidence="1"/>
<dbReference type="EMBL" id="AL583919">
    <property type="protein sequence ID" value="CAC30301.1"/>
    <property type="molecule type" value="Genomic_DNA"/>
</dbReference>
<dbReference type="PIR" id="A87008">
    <property type="entry name" value="A87008"/>
</dbReference>
<dbReference type="RefSeq" id="NP_301607.1">
    <property type="nucleotide sequence ID" value="NC_002677.1"/>
</dbReference>
<dbReference type="SMR" id="Q9CCI3"/>
<dbReference type="STRING" id="272631.gene:17574616"/>
<dbReference type="KEGG" id="mle:ML0792"/>
<dbReference type="PATRIC" id="fig|272631.5.peg.1425"/>
<dbReference type="Leproma" id="ML0792"/>
<dbReference type="eggNOG" id="COG0128">
    <property type="taxonomic scope" value="Bacteria"/>
</dbReference>
<dbReference type="HOGENOM" id="CLU_024321_0_0_11"/>
<dbReference type="OrthoDB" id="9809920at2"/>
<dbReference type="UniPathway" id="UPA00053">
    <property type="reaction ID" value="UER00089"/>
</dbReference>
<dbReference type="Proteomes" id="UP000000806">
    <property type="component" value="Chromosome"/>
</dbReference>
<dbReference type="GO" id="GO:0005737">
    <property type="term" value="C:cytoplasm"/>
    <property type="evidence" value="ECO:0007669"/>
    <property type="project" value="UniProtKB-SubCell"/>
</dbReference>
<dbReference type="GO" id="GO:0003866">
    <property type="term" value="F:3-phosphoshikimate 1-carboxyvinyltransferase activity"/>
    <property type="evidence" value="ECO:0007669"/>
    <property type="project" value="UniProtKB-UniRule"/>
</dbReference>
<dbReference type="GO" id="GO:0008652">
    <property type="term" value="P:amino acid biosynthetic process"/>
    <property type="evidence" value="ECO:0007669"/>
    <property type="project" value="UniProtKB-KW"/>
</dbReference>
<dbReference type="GO" id="GO:0009073">
    <property type="term" value="P:aromatic amino acid family biosynthetic process"/>
    <property type="evidence" value="ECO:0007669"/>
    <property type="project" value="UniProtKB-KW"/>
</dbReference>
<dbReference type="GO" id="GO:0009423">
    <property type="term" value="P:chorismate biosynthetic process"/>
    <property type="evidence" value="ECO:0007669"/>
    <property type="project" value="UniProtKB-UniRule"/>
</dbReference>
<dbReference type="CDD" id="cd01556">
    <property type="entry name" value="EPSP_synthase"/>
    <property type="match status" value="1"/>
</dbReference>
<dbReference type="FunFam" id="3.65.10.10:FF:000010">
    <property type="entry name" value="3-phosphoshikimate 1-carboxyvinyltransferase"/>
    <property type="match status" value="1"/>
</dbReference>
<dbReference type="FunFam" id="3.65.10.10:FF:000011">
    <property type="entry name" value="3-phosphoshikimate 1-carboxyvinyltransferase"/>
    <property type="match status" value="1"/>
</dbReference>
<dbReference type="Gene3D" id="3.65.10.10">
    <property type="entry name" value="Enolpyruvate transferase domain"/>
    <property type="match status" value="2"/>
</dbReference>
<dbReference type="HAMAP" id="MF_00210">
    <property type="entry name" value="EPSP_synth"/>
    <property type="match status" value="1"/>
</dbReference>
<dbReference type="InterPro" id="IPR001986">
    <property type="entry name" value="Enolpyruvate_Tfrase_dom"/>
</dbReference>
<dbReference type="InterPro" id="IPR036968">
    <property type="entry name" value="Enolpyruvate_Tfrase_sf"/>
</dbReference>
<dbReference type="InterPro" id="IPR006264">
    <property type="entry name" value="EPSP_synthase"/>
</dbReference>
<dbReference type="InterPro" id="IPR023193">
    <property type="entry name" value="EPSP_synthase_CS"/>
</dbReference>
<dbReference type="InterPro" id="IPR013792">
    <property type="entry name" value="RNA3'P_cycl/enolpyr_Trfase_a/b"/>
</dbReference>
<dbReference type="NCBIfam" id="TIGR01356">
    <property type="entry name" value="aroA"/>
    <property type="match status" value="1"/>
</dbReference>
<dbReference type="PANTHER" id="PTHR21090">
    <property type="entry name" value="AROM/DEHYDROQUINATE SYNTHASE"/>
    <property type="match status" value="1"/>
</dbReference>
<dbReference type="PANTHER" id="PTHR21090:SF5">
    <property type="entry name" value="PENTAFUNCTIONAL AROM POLYPEPTIDE"/>
    <property type="match status" value="1"/>
</dbReference>
<dbReference type="Pfam" id="PF00275">
    <property type="entry name" value="EPSP_synthase"/>
    <property type="match status" value="1"/>
</dbReference>
<dbReference type="PIRSF" id="PIRSF000505">
    <property type="entry name" value="EPSPS"/>
    <property type="match status" value="1"/>
</dbReference>
<dbReference type="SUPFAM" id="SSF55205">
    <property type="entry name" value="EPT/RTPC-like"/>
    <property type="match status" value="1"/>
</dbReference>
<dbReference type="PROSITE" id="PS00104">
    <property type="entry name" value="EPSP_SYNTHASE_1"/>
    <property type="match status" value="1"/>
</dbReference>
<dbReference type="PROSITE" id="PS00885">
    <property type="entry name" value="EPSP_SYNTHASE_2"/>
    <property type="match status" value="1"/>
</dbReference>
<comment type="function">
    <text evidence="1">Catalyzes the transfer of the enolpyruvyl moiety of phosphoenolpyruvate (PEP) to the 5-hydroxyl of shikimate-3-phosphate (S3P) to produce enolpyruvyl shikimate-3-phosphate and inorganic phosphate.</text>
</comment>
<comment type="catalytic activity">
    <reaction evidence="1">
        <text>3-phosphoshikimate + phosphoenolpyruvate = 5-O-(1-carboxyvinyl)-3-phosphoshikimate + phosphate</text>
        <dbReference type="Rhea" id="RHEA:21256"/>
        <dbReference type="ChEBI" id="CHEBI:43474"/>
        <dbReference type="ChEBI" id="CHEBI:57701"/>
        <dbReference type="ChEBI" id="CHEBI:58702"/>
        <dbReference type="ChEBI" id="CHEBI:145989"/>
        <dbReference type="EC" id="2.5.1.19"/>
    </reaction>
    <physiologicalReaction direction="left-to-right" evidence="1">
        <dbReference type="Rhea" id="RHEA:21257"/>
    </physiologicalReaction>
</comment>
<comment type="pathway">
    <text evidence="1">Metabolic intermediate biosynthesis; chorismate biosynthesis; chorismate from D-erythrose 4-phosphate and phosphoenolpyruvate: step 6/7.</text>
</comment>
<comment type="subunit">
    <text evidence="1">Monomer.</text>
</comment>
<comment type="subcellular location">
    <subcellularLocation>
        <location evidence="1">Cytoplasm</location>
    </subcellularLocation>
</comment>
<comment type="similarity">
    <text evidence="1 2">Belongs to the EPSP synthase family.</text>
</comment>
<gene>
    <name evidence="1" type="primary">aroA</name>
    <name type="ordered locus">ML0792</name>
</gene>
<accession>Q9CCI3</accession>
<name>AROA_MYCLE</name>